<protein>
    <recommendedName>
        <fullName evidence="1">UDP-3-O-acyl-N-acetylglucosamine deacetylase</fullName>
        <shortName evidence="1">UDP-3-O-acyl-GlcNAc deacetylase</shortName>
        <ecNumber evidence="1">3.5.1.108</ecNumber>
    </recommendedName>
    <alternativeName>
        <fullName evidence="1">UDP-3-O-[R-3-hydroxymyristoyl]-N-acetylglucosamine deacetylase</fullName>
    </alternativeName>
</protein>
<organism>
    <name type="scientific">Xanthomonas oryzae pv. oryzae (strain PXO99A)</name>
    <dbReference type="NCBI Taxonomy" id="360094"/>
    <lineage>
        <taxon>Bacteria</taxon>
        <taxon>Pseudomonadati</taxon>
        <taxon>Pseudomonadota</taxon>
        <taxon>Gammaproteobacteria</taxon>
        <taxon>Lysobacterales</taxon>
        <taxon>Lysobacteraceae</taxon>
        <taxon>Xanthomonas</taxon>
    </lineage>
</organism>
<feature type="chain" id="PRO_1000122833" description="UDP-3-O-acyl-N-acetylglucosamine deacetylase">
    <location>
        <begin position="1"/>
        <end position="303"/>
    </location>
</feature>
<feature type="active site" description="Proton donor" evidence="1">
    <location>
        <position position="264"/>
    </location>
</feature>
<feature type="binding site" evidence="1">
    <location>
        <position position="78"/>
    </location>
    <ligand>
        <name>Zn(2+)</name>
        <dbReference type="ChEBI" id="CHEBI:29105"/>
    </ligand>
</feature>
<feature type="binding site" evidence="1">
    <location>
        <position position="237"/>
    </location>
    <ligand>
        <name>Zn(2+)</name>
        <dbReference type="ChEBI" id="CHEBI:29105"/>
    </ligand>
</feature>
<feature type="binding site" evidence="1">
    <location>
        <position position="241"/>
    </location>
    <ligand>
        <name>Zn(2+)</name>
        <dbReference type="ChEBI" id="CHEBI:29105"/>
    </ligand>
</feature>
<sequence>MTQQRTLKNTIRATGVGLHSGDKVYMTLRPAPVDHGVVFRRVDLEPIVEVPADAELVTETTLCTGLSCNGAKIQTVEHLMSALAGLGVDNVIVELSSAELPIMDGSSGPFVFLLQSAGIVEQSKPKRFIRIKQTVEVRDGDKVARFEPYEGYKLGFTIEFNHPMIPAKQSRQEIDFSTSAYVTEISRARTFGFMRDLEYMRERNLGLGGSMDNAIVLDEFRVLNEDGLRYTNEFVRHKILDAIGDLYLAGGAILGAYEGFKSGHALNNKLVRALLADQAAWEWVSFPEGTEQPPVTYASPVYA</sequence>
<evidence type="ECO:0000255" key="1">
    <source>
        <dbReference type="HAMAP-Rule" id="MF_00388"/>
    </source>
</evidence>
<proteinExistence type="inferred from homology"/>
<accession>B2SNZ9</accession>
<name>LPXC_XANOP</name>
<comment type="function">
    <text evidence="1">Catalyzes the hydrolysis of UDP-3-O-myristoyl-N-acetylglucosamine to form UDP-3-O-myristoylglucosamine and acetate, the committed step in lipid A biosynthesis.</text>
</comment>
<comment type="catalytic activity">
    <reaction evidence="1">
        <text>a UDP-3-O-[(3R)-3-hydroxyacyl]-N-acetyl-alpha-D-glucosamine + H2O = a UDP-3-O-[(3R)-3-hydroxyacyl]-alpha-D-glucosamine + acetate</text>
        <dbReference type="Rhea" id="RHEA:67816"/>
        <dbReference type="ChEBI" id="CHEBI:15377"/>
        <dbReference type="ChEBI" id="CHEBI:30089"/>
        <dbReference type="ChEBI" id="CHEBI:137740"/>
        <dbReference type="ChEBI" id="CHEBI:173225"/>
        <dbReference type="EC" id="3.5.1.108"/>
    </reaction>
</comment>
<comment type="cofactor">
    <cofactor evidence="1">
        <name>Zn(2+)</name>
        <dbReference type="ChEBI" id="CHEBI:29105"/>
    </cofactor>
</comment>
<comment type="pathway">
    <text evidence="1">Glycolipid biosynthesis; lipid IV(A) biosynthesis; lipid IV(A) from (3R)-3-hydroxytetradecanoyl-[acyl-carrier-protein] and UDP-N-acetyl-alpha-D-glucosamine: step 2/6.</text>
</comment>
<comment type="similarity">
    <text evidence="1">Belongs to the LpxC family.</text>
</comment>
<dbReference type="EC" id="3.5.1.108" evidence="1"/>
<dbReference type="EMBL" id="CP000967">
    <property type="protein sequence ID" value="ACD57700.1"/>
    <property type="molecule type" value="Genomic_DNA"/>
</dbReference>
<dbReference type="RefSeq" id="WP_011260225.1">
    <property type="nucleotide sequence ID" value="NC_010717.2"/>
</dbReference>
<dbReference type="SMR" id="B2SNZ9"/>
<dbReference type="KEGG" id="xop:PXO_04361"/>
<dbReference type="eggNOG" id="COG0774">
    <property type="taxonomic scope" value="Bacteria"/>
</dbReference>
<dbReference type="HOGENOM" id="CLU_046528_1_0_6"/>
<dbReference type="UniPathway" id="UPA00359">
    <property type="reaction ID" value="UER00478"/>
</dbReference>
<dbReference type="Proteomes" id="UP000001740">
    <property type="component" value="Chromosome"/>
</dbReference>
<dbReference type="GO" id="GO:0016020">
    <property type="term" value="C:membrane"/>
    <property type="evidence" value="ECO:0007669"/>
    <property type="project" value="GOC"/>
</dbReference>
<dbReference type="GO" id="GO:0046872">
    <property type="term" value="F:metal ion binding"/>
    <property type="evidence" value="ECO:0007669"/>
    <property type="project" value="UniProtKB-KW"/>
</dbReference>
<dbReference type="GO" id="GO:0103117">
    <property type="term" value="F:UDP-3-O-acyl-N-acetylglucosamine deacetylase activity"/>
    <property type="evidence" value="ECO:0007669"/>
    <property type="project" value="UniProtKB-UniRule"/>
</dbReference>
<dbReference type="GO" id="GO:0009245">
    <property type="term" value="P:lipid A biosynthetic process"/>
    <property type="evidence" value="ECO:0007669"/>
    <property type="project" value="UniProtKB-UniRule"/>
</dbReference>
<dbReference type="Gene3D" id="3.30.230.20">
    <property type="entry name" value="lpxc deacetylase, domain 1"/>
    <property type="match status" value="1"/>
</dbReference>
<dbReference type="Gene3D" id="3.30.1700.10">
    <property type="entry name" value="lpxc deacetylase, domain 2"/>
    <property type="match status" value="1"/>
</dbReference>
<dbReference type="HAMAP" id="MF_00388">
    <property type="entry name" value="LpxC"/>
    <property type="match status" value="1"/>
</dbReference>
<dbReference type="InterPro" id="IPR020568">
    <property type="entry name" value="Ribosomal_Su5_D2-typ_SF"/>
</dbReference>
<dbReference type="InterPro" id="IPR004463">
    <property type="entry name" value="UDP-acyl_GlcNac_deAcase"/>
</dbReference>
<dbReference type="InterPro" id="IPR011334">
    <property type="entry name" value="UDP-acyl_GlcNac_deAcase_C"/>
</dbReference>
<dbReference type="InterPro" id="IPR015870">
    <property type="entry name" value="UDP-acyl_N-AcGlcN_deAcase_N"/>
</dbReference>
<dbReference type="NCBIfam" id="TIGR00325">
    <property type="entry name" value="lpxC"/>
    <property type="match status" value="1"/>
</dbReference>
<dbReference type="PANTHER" id="PTHR33694">
    <property type="entry name" value="UDP-3-O-ACYL-N-ACETYLGLUCOSAMINE DEACETYLASE 1, MITOCHONDRIAL-RELATED"/>
    <property type="match status" value="1"/>
</dbReference>
<dbReference type="PANTHER" id="PTHR33694:SF1">
    <property type="entry name" value="UDP-3-O-ACYL-N-ACETYLGLUCOSAMINE DEACETYLASE 1, MITOCHONDRIAL-RELATED"/>
    <property type="match status" value="1"/>
</dbReference>
<dbReference type="Pfam" id="PF03331">
    <property type="entry name" value="LpxC"/>
    <property type="match status" value="1"/>
</dbReference>
<dbReference type="SUPFAM" id="SSF54211">
    <property type="entry name" value="Ribosomal protein S5 domain 2-like"/>
    <property type="match status" value="2"/>
</dbReference>
<reference key="1">
    <citation type="journal article" date="2008" name="BMC Genomics">
        <title>Genome sequence and rapid evolution of the rice pathogen Xanthomonas oryzae pv. oryzae PXO99A.</title>
        <authorList>
            <person name="Salzberg S.L."/>
            <person name="Sommer D.D."/>
            <person name="Schatz M.C."/>
            <person name="Phillippy A.M."/>
            <person name="Rabinowicz P.D."/>
            <person name="Tsuge S."/>
            <person name="Furutani A."/>
            <person name="Ochiai H."/>
            <person name="Delcher A.L."/>
            <person name="Kelley D."/>
            <person name="Madupu R."/>
            <person name="Puiu D."/>
            <person name="Radune D."/>
            <person name="Shumway M."/>
            <person name="Trapnell C."/>
            <person name="Aparna G."/>
            <person name="Jha G."/>
            <person name="Pandey A."/>
            <person name="Patil P.B."/>
            <person name="Ishihara H."/>
            <person name="Meyer D.F."/>
            <person name="Szurek B."/>
            <person name="Verdier V."/>
            <person name="Koebnik R."/>
            <person name="Dow J.M."/>
            <person name="Ryan R.P."/>
            <person name="Hirata H."/>
            <person name="Tsuyumu S."/>
            <person name="Won Lee S."/>
            <person name="Seo Y.-S."/>
            <person name="Sriariyanum M."/>
            <person name="Ronald P.C."/>
            <person name="Sonti R.V."/>
            <person name="Van Sluys M.-A."/>
            <person name="Leach J.E."/>
            <person name="White F.F."/>
            <person name="Bogdanove A.J."/>
        </authorList>
    </citation>
    <scope>NUCLEOTIDE SEQUENCE [LARGE SCALE GENOMIC DNA]</scope>
    <source>
        <strain>PXO99A</strain>
    </source>
</reference>
<keyword id="KW-0378">Hydrolase</keyword>
<keyword id="KW-0441">Lipid A biosynthesis</keyword>
<keyword id="KW-0444">Lipid biosynthesis</keyword>
<keyword id="KW-0443">Lipid metabolism</keyword>
<keyword id="KW-0479">Metal-binding</keyword>
<keyword id="KW-0862">Zinc</keyword>
<gene>
    <name evidence="1" type="primary">lpxC</name>
    <name type="ordered locus">PXO_04361</name>
</gene>